<feature type="chain" id="PRO_0000196481" description="DNA replication and repair protein RecF">
    <location>
        <begin position="1"/>
        <end position="364"/>
    </location>
</feature>
<feature type="binding site" evidence="1">
    <location>
        <begin position="30"/>
        <end position="37"/>
    </location>
    <ligand>
        <name>ATP</name>
        <dbReference type="ChEBI" id="CHEBI:30616"/>
    </ligand>
</feature>
<feature type="strand" evidence="3">
    <location>
        <begin position="2"/>
        <end position="11"/>
    </location>
</feature>
<feature type="strand" evidence="3">
    <location>
        <begin position="16"/>
        <end position="20"/>
    </location>
</feature>
<feature type="strand" evidence="3">
    <location>
        <begin position="23"/>
        <end position="29"/>
    </location>
</feature>
<feature type="helix" evidence="3">
    <location>
        <begin position="36"/>
        <end position="48"/>
    </location>
</feature>
<feature type="helix" evidence="3">
    <location>
        <begin position="57"/>
        <end position="60"/>
    </location>
</feature>
<feature type="strand" evidence="3">
    <location>
        <begin position="66"/>
        <end position="76"/>
    </location>
</feature>
<feature type="strand" evidence="3">
    <location>
        <begin position="79"/>
        <end position="89"/>
    </location>
</feature>
<feature type="turn" evidence="2">
    <location>
        <begin position="90"/>
        <end position="92"/>
    </location>
</feature>
<feature type="strand" evidence="3">
    <location>
        <begin position="94"/>
        <end position="98"/>
    </location>
</feature>
<feature type="helix" evidence="3">
    <location>
        <begin position="106"/>
        <end position="109"/>
    </location>
</feature>
<feature type="strand" evidence="3">
    <location>
        <begin position="115"/>
        <end position="118"/>
    </location>
</feature>
<feature type="helix" evidence="3">
    <location>
        <begin position="120"/>
        <end position="123"/>
    </location>
</feature>
<feature type="helix" evidence="3">
    <location>
        <begin position="124"/>
        <end position="127"/>
    </location>
</feature>
<feature type="helix" evidence="3">
    <location>
        <begin position="130"/>
        <end position="144"/>
    </location>
</feature>
<feature type="helix" evidence="3">
    <location>
        <begin position="146"/>
        <end position="170"/>
    </location>
</feature>
<feature type="strand" evidence="3">
    <location>
        <begin position="171"/>
        <end position="174"/>
    </location>
</feature>
<feature type="helix" evidence="3">
    <location>
        <begin position="176"/>
        <end position="178"/>
    </location>
</feature>
<feature type="helix" evidence="3">
    <location>
        <begin position="179"/>
        <end position="215"/>
    </location>
</feature>
<feature type="strand" evidence="3">
    <location>
        <begin position="220"/>
        <end position="225"/>
    </location>
</feature>
<feature type="helix" evidence="3">
    <location>
        <begin position="236"/>
        <end position="249"/>
    </location>
</feature>
<feature type="helix" evidence="3">
    <location>
        <begin position="251"/>
        <end position="257"/>
    </location>
</feature>
<feature type="helix" evidence="3">
    <location>
        <begin position="264"/>
        <end position="266"/>
    </location>
</feature>
<feature type="strand" evidence="3">
    <location>
        <begin position="268"/>
        <end position="273"/>
    </location>
</feature>
<feature type="turn" evidence="3">
    <location>
        <begin position="278"/>
        <end position="280"/>
    </location>
</feature>
<feature type="helix" evidence="3">
    <location>
        <begin position="284"/>
        <end position="306"/>
    </location>
</feature>
<feature type="strand" evidence="3">
    <location>
        <begin position="311"/>
        <end position="314"/>
    </location>
</feature>
<feature type="strand" evidence="3">
    <location>
        <begin position="318"/>
        <end position="320"/>
    </location>
</feature>
<feature type="helix" evidence="3">
    <location>
        <begin position="324"/>
        <end position="327"/>
    </location>
</feature>
<feature type="helix" evidence="3">
    <location>
        <begin position="329"/>
        <end position="332"/>
    </location>
</feature>
<feature type="turn" evidence="3">
    <location>
        <begin position="333"/>
        <end position="335"/>
    </location>
</feature>
<feature type="strand" evidence="3">
    <location>
        <begin position="338"/>
        <end position="343"/>
    </location>
</feature>
<feature type="strand" evidence="3">
    <location>
        <begin position="345"/>
        <end position="348"/>
    </location>
</feature>
<feature type="strand" evidence="3">
    <location>
        <begin position="351"/>
        <end position="357"/>
    </location>
</feature>
<keyword id="KW-0002">3D-structure</keyword>
<keyword id="KW-0067">ATP-binding</keyword>
<keyword id="KW-0963">Cytoplasm</keyword>
<keyword id="KW-0227">DNA damage</keyword>
<keyword id="KW-0234">DNA repair</keyword>
<keyword id="KW-0235">DNA replication</keyword>
<keyword id="KW-0238">DNA-binding</keyword>
<keyword id="KW-0547">Nucleotide-binding</keyword>
<keyword id="KW-1185">Reference proteome</keyword>
<keyword id="KW-0742">SOS response</keyword>
<protein>
    <recommendedName>
        <fullName evidence="1">DNA replication and repair protein RecF</fullName>
    </recommendedName>
</protein>
<proteinExistence type="evidence at protein level"/>
<evidence type="ECO:0000255" key="1">
    <source>
        <dbReference type="HAMAP-Rule" id="MF_00365"/>
    </source>
</evidence>
<evidence type="ECO:0007829" key="2">
    <source>
        <dbReference type="PDB" id="5Z67"/>
    </source>
</evidence>
<evidence type="ECO:0007829" key="3">
    <source>
        <dbReference type="PDB" id="5Z69"/>
    </source>
</evidence>
<name>RECF_CALS4</name>
<sequence length="364" mass="42276">MYLKEIFVDNFRNLKKQKLEFCEGVNLIYGLNAQGKSNLLEAIRLLSMGRSFRGSKMSELVKFDEEYFYVRGLVRSADFYEKKIEFGYKVNGNKVIKVNGNKLKSTGEILGHFLTVIFSPEDIEIIKEGPSRRRKYLDACISVIDKNYFFDLLQYNKTLSNRNSLLKKIKEEGKGEDLLEIFDEKLAEYGARIIKVRNNYLEKLKNSMSKFLMEISNEKLEIIYLNSAGVKEVHEENLIREKLKNRLTKSLTLDLKYLSTQVGPHREDFKILINGYDSRVYSSQGQKRTAALCLKLSELEILEEETGEKPVLLLDDVMSELDDNRKKYILKKLEGFQSFITHTSKSDVEGDCCFKIYDGIVMRE</sequence>
<organism>
    <name type="scientific">Caldanaerobacter subterraneus subsp. tengcongensis (strain DSM 15242 / JCM 11007 / NBRC 100824 / MB4)</name>
    <name type="common">Thermoanaerobacter tengcongensis</name>
    <dbReference type="NCBI Taxonomy" id="273068"/>
    <lineage>
        <taxon>Bacteria</taxon>
        <taxon>Bacillati</taxon>
        <taxon>Bacillota</taxon>
        <taxon>Clostridia</taxon>
        <taxon>Thermoanaerobacterales</taxon>
        <taxon>Thermoanaerobacteraceae</taxon>
        <taxon>Caldanaerobacter</taxon>
    </lineage>
</organism>
<gene>
    <name evidence="1" type="primary">recF</name>
    <name type="ordered locus">TTE0004</name>
</gene>
<accession>Q8RDL3</accession>
<reference key="1">
    <citation type="journal article" date="2002" name="Genome Res.">
        <title>A complete sequence of the T. tengcongensis genome.</title>
        <authorList>
            <person name="Bao Q."/>
            <person name="Tian Y."/>
            <person name="Li W."/>
            <person name="Xu Z."/>
            <person name="Xuan Z."/>
            <person name="Hu S."/>
            <person name="Dong W."/>
            <person name="Yang J."/>
            <person name="Chen Y."/>
            <person name="Xue Y."/>
            <person name="Xu Y."/>
            <person name="Lai X."/>
            <person name="Huang L."/>
            <person name="Dong X."/>
            <person name="Ma Y."/>
            <person name="Ling L."/>
            <person name="Tan H."/>
            <person name="Chen R."/>
            <person name="Wang J."/>
            <person name="Yu J."/>
            <person name="Yang H."/>
        </authorList>
    </citation>
    <scope>NUCLEOTIDE SEQUENCE [LARGE SCALE GENOMIC DNA]</scope>
    <source>
        <strain>DSM 15242 / JCM 11007 / NBRC 100824 / MB4</strain>
    </source>
</reference>
<comment type="function">
    <text evidence="1">The RecF protein is involved in DNA metabolism; it is required for DNA replication and normal SOS inducibility. RecF binds preferentially to single-stranded, linear DNA. It also seems to bind ATP.</text>
</comment>
<comment type="subcellular location">
    <subcellularLocation>
        <location evidence="1">Cytoplasm</location>
    </subcellularLocation>
</comment>
<comment type="similarity">
    <text evidence="1">Belongs to the RecF family.</text>
</comment>
<dbReference type="EMBL" id="AE008691">
    <property type="protein sequence ID" value="AAM23321.1"/>
    <property type="molecule type" value="Genomic_DNA"/>
</dbReference>
<dbReference type="RefSeq" id="WP_009610502.1">
    <property type="nucleotide sequence ID" value="NC_003869.1"/>
</dbReference>
<dbReference type="PDB" id="5Z67">
    <property type="method" value="X-ray"/>
    <property type="resolution" value="2.20 A"/>
    <property type="chains" value="A=1-361"/>
</dbReference>
<dbReference type="PDB" id="5Z68">
    <property type="method" value="X-ray"/>
    <property type="resolution" value="3.00 A"/>
    <property type="chains" value="A/B/C/D=1-361"/>
</dbReference>
<dbReference type="PDB" id="5Z69">
    <property type="method" value="X-ray"/>
    <property type="resolution" value="2.10 A"/>
    <property type="chains" value="A/B=1-361"/>
</dbReference>
<dbReference type="PDBsum" id="5Z67"/>
<dbReference type="PDBsum" id="5Z68"/>
<dbReference type="PDBsum" id="5Z69"/>
<dbReference type="SMR" id="Q8RDL3"/>
<dbReference type="STRING" id="273068.TTE0004"/>
<dbReference type="KEGG" id="tte:TTE0004"/>
<dbReference type="eggNOG" id="COG1195">
    <property type="taxonomic scope" value="Bacteria"/>
</dbReference>
<dbReference type="HOGENOM" id="CLU_040267_0_1_9"/>
<dbReference type="OrthoDB" id="9803889at2"/>
<dbReference type="Proteomes" id="UP000000555">
    <property type="component" value="Chromosome"/>
</dbReference>
<dbReference type="GO" id="GO:0005737">
    <property type="term" value="C:cytoplasm"/>
    <property type="evidence" value="ECO:0007669"/>
    <property type="project" value="UniProtKB-SubCell"/>
</dbReference>
<dbReference type="GO" id="GO:0005524">
    <property type="term" value="F:ATP binding"/>
    <property type="evidence" value="ECO:0007669"/>
    <property type="project" value="UniProtKB-UniRule"/>
</dbReference>
<dbReference type="GO" id="GO:0003697">
    <property type="term" value="F:single-stranded DNA binding"/>
    <property type="evidence" value="ECO:0007669"/>
    <property type="project" value="UniProtKB-UniRule"/>
</dbReference>
<dbReference type="GO" id="GO:0006260">
    <property type="term" value="P:DNA replication"/>
    <property type="evidence" value="ECO:0007669"/>
    <property type="project" value="UniProtKB-UniRule"/>
</dbReference>
<dbReference type="GO" id="GO:0000731">
    <property type="term" value="P:DNA synthesis involved in DNA repair"/>
    <property type="evidence" value="ECO:0007669"/>
    <property type="project" value="TreeGrafter"/>
</dbReference>
<dbReference type="GO" id="GO:0006302">
    <property type="term" value="P:double-strand break repair"/>
    <property type="evidence" value="ECO:0007669"/>
    <property type="project" value="TreeGrafter"/>
</dbReference>
<dbReference type="GO" id="GO:0009432">
    <property type="term" value="P:SOS response"/>
    <property type="evidence" value="ECO:0007669"/>
    <property type="project" value="UniProtKB-UniRule"/>
</dbReference>
<dbReference type="Gene3D" id="3.40.50.300">
    <property type="entry name" value="P-loop containing nucleotide triphosphate hydrolases"/>
    <property type="match status" value="1"/>
</dbReference>
<dbReference type="Gene3D" id="1.20.1050.90">
    <property type="entry name" value="RecF/RecN/SMC, N-terminal domain"/>
    <property type="match status" value="1"/>
</dbReference>
<dbReference type="HAMAP" id="MF_00365">
    <property type="entry name" value="RecF"/>
    <property type="match status" value="1"/>
</dbReference>
<dbReference type="InterPro" id="IPR001238">
    <property type="entry name" value="DNA-binding_RecF"/>
</dbReference>
<dbReference type="InterPro" id="IPR018078">
    <property type="entry name" value="DNA-binding_RecF_CS"/>
</dbReference>
<dbReference type="InterPro" id="IPR027417">
    <property type="entry name" value="P-loop_NTPase"/>
</dbReference>
<dbReference type="InterPro" id="IPR003395">
    <property type="entry name" value="RecF/RecN/SMC_N"/>
</dbReference>
<dbReference type="InterPro" id="IPR042174">
    <property type="entry name" value="RecF_2"/>
</dbReference>
<dbReference type="NCBIfam" id="TIGR00611">
    <property type="entry name" value="recf"/>
    <property type="match status" value="1"/>
</dbReference>
<dbReference type="PANTHER" id="PTHR32182">
    <property type="entry name" value="DNA REPLICATION AND REPAIR PROTEIN RECF"/>
    <property type="match status" value="1"/>
</dbReference>
<dbReference type="PANTHER" id="PTHR32182:SF0">
    <property type="entry name" value="DNA REPLICATION AND REPAIR PROTEIN RECF"/>
    <property type="match status" value="1"/>
</dbReference>
<dbReference type="Pfam" id="PF02463">
    <property type="entry name" value="SMC_N"/>
    <property type="match status" value="1"/>
</dbReference>
<dbReference type="SUPFAM" id="SSF52540">
    <property type="entry name" value="P-loop containing nucleoside triphosphate hydrolases"/>
    <property type="match status" value="1"/>
</dbReference>
<dbReference type="PROSITE" id="PS00617">
    <property type="entry name" value="RECF_1"/>
    <property type="match status" value="1"/>
</dbReference>
<dbReference type="PROSITE" id="PS00618">
    <property type="entry name" value="RECF_2"/>
    <property type="match status" value="1"/>
</dbReference>